<sequence length="276" mass="32133">MATYFVGDLQGCYDELQRLLEKVRFDPTQDLLYLVGDLVARGDKSLECLRLVKSLGKSAQTVLGNHDLHLLATAFGIKKVKSRDRVDAIFHAEDFEELIHWLRHQPLLVYNAKQNWVMTHAGISPDWDINTAQACAKEVENVLQQGDYCHLLSQMYDSRPDLWSADLTGIERLRYIINVFTRMRFCYRDHRLDFDCKSPVDKAPEELTPWFNLSNPLYKQVDIIFGHWASLVDTPTPHHIYALDTGCVWNNRMTMLRWEDKQYFCQPALKDYAFNG</sequence>
<reference key="1">
    <citation type="journal article" date="2004" name="Nat. Biotechnol.">
        <title>The genome sequence of the capnophilic rumen bacterium Mannheimia succiniciproducens.</title>
        <authorList>
            <person name="Hong S.H."/>
            <person name="Kim J.S."/>
            <person name="Lee S.Y."/>
            <person name="In Y.H."/>
            <person name="Choi S.S."/>
            <person name="Rih J.-K."/>
            <person name="Kim C.H."/>
            <person name="Jeong H."/>
            <person name="Hur C.G."/>
            <person name="Kim J.J."/>
        </authorList>
    </citation>
    <scope>NUCLEOTIDE SEQUENCE [LARGE SCALE GENOMIC DNA]</scope>
    <source>
        <strain>KCTC 0769BP / MBEL55E</strain>
    </source>
</reference>
<dbReference type="EC" id="3.6.1.41" evidence="1"/>
<dbReference type="EMBL" id="AE016827">
    <property type="protein sequence ID" value="AAU37238.1"/>
    <property type="molecule type" value="Genomic_DNA"/>
</dbReference>
<dbReference type="RefSeq" id="WP_011199810.1">
    <property type="nucleotide sequence ID" value="NC_006300.1"/>
</dbReference>
<dbReference type="SMR" id="Q65UX2"/>
<dbReference type="STRING" id="221988.MS0631"/>
<dbReference type="KEGG" id="msu:MS0631"/>
<dbReference type="eggNOG" id="COG0639">
    <property type="taxonomic scope" value="Bacteria"/>
</dbReference>
<dbReference type="HOGENOM" id="CLU_056184_2_0_6"/>
<dbReference type="OrthoDB" id="9807890at2"/>
<dbReference type="Proteomes" id="UP000000607">
    <property type="component" value="Chromosome"/>
</dbReference>
<dbReference type="GO" id="GO:0008803">
    <property type="term" value="F:bis(5'-nucleosyl)-tetraphosphatase (symmetrical) activity"/>
    <property type="evidence" value="ECO:0007669"/>
    <property type="project" value="UniProtKB-UniRule"/>
</dbReference>
<dbReference type="CDD" id="cd07422">
    <property type="entry name" value="MPP_ApaH"/>
    <property type="match status" value="1"/>
</dbReference>
<dbReference type="Gene3D" id="3.60.21.10">
    <property type="match status" value="1"/>
</dbReference>
<dbReference type="HAMAP" id="MF_00199">
    <property type="entry name" value="ApaH"/>
    <property type="match status" value="1"/>
</dbReference>
<dbReference type="InterPro" id="IPR004617">
    <property type="entry name" value="ApaH"/>
</dbReference>
<dbReference type="InterPro" id="IPR004843">
    <property type="entry name" value="Calcineurin-like_PHP_ApaH"/>
</dbReference>
<dbReference type="InterPro" id="IPR029052">
    <property type="entry name" value="Metallo-depent_PP-like"/>
</dbReference>
<dbReference type="NCBIfam" id="TIGR00668">
    <property type="entry name" value="apaH"/>
    <property type="match status" value="1"/>
</dbReference>
<dbReference type="NCBIfam" id="NF001204">
    <property type="entry name" value="PRK00166.1"/>
    <property type="match status" value="1"/>
</dbReference>
<dbReference type="PANTHER" id="PTHR40942">
    <property type="match status" value="1"/>
</dbReference>
<dbReference type="PANTHER" id="PTHR40942:SF4">
    <property type="entry name" value="CYTOCHROME C5"/>
    <property type="match status" value="1"/>
</dbReference>
<dbReference type="Pfam" id="PF00149">
    <property type="entry name" value="Metallophos"/>
    <property type="match status" value="1"/>
</dbReference>
<dbReference type="PIRSF" id="PIRSF000903">
    <property type="entry name" value="B5n-ttraPtase_sm"/>
    <property type="match status" value="1"/>
</dbReference>
<dbReference type="SUPFAM" id="SSF56300">
    <property type="entry name" value="Metallo-dependent phosphatases"/>
    <property type="match status" value="1"/>
</dbReference>
<protein>
    <recommendedName>
        <fullName evidence="1">Bis(5'-nucleosyl)-tetraphosphatase, symmetrical</fullName>
        <ecNumber evidence="1">3.6.1.41</ecNumber>
    </recommendedName>
    <alternativeName>
        <fullName evidence="1">Ap4A hydrolase</fullName>
    </alternativeName>
    <alternativeName>
        <fullName evidence="1">Diadenosine 5',5'''-P1,P4-tetraphosphate pyrophosphohydrolase</fullName>
    </alternativeName>
    <alternativeName>
        <fullName evidence="1">Diadenosine tetraphosphatase</fullName>
    </alternativeName>
</protein>
<organism>
    <name type="scientific">Mannheimia succiniciproducens (strain KCTC 0769BP / MBEL55E)</name>
    <dbReference type="NCBI Taxonomy" id="221988"/>
    <lineage>
        <taxon>Bacteria</taxon>
        <taxon>Pseudomonadati</taxon>
        <taxon>Pseudomonadota</taxon>
        <taxon>Gammaproteobacteria</taxon>
        <taxon>Pasteurellales</taxon>
        <taxon>Pasteurellaceae</taxon>
        <taxon>Basfia</taxon>
    </lineage>
</organism>
<proteinExistence type="inferred from homology"/>
<gene>
    <name evidence="1" type="primary">apaH</name>
    <name type="ordered locus">MS0631</name>
</gene>
<name>APAH_MANSM</name>
<evidence type="ECO:0000255" key="1">
    <source>
        <dbReference type="HAMAP-Rule" id="MF_00199"/>
    </source>
</evidence>
<accession>Q65UX2</accession>
<keyword id="KW-0378">Hydrolase</keyword>
<feature type="chain" id="PRO_0000197998" description="Bis(5'-nucleosyl)-tetraphosphatase, symmetrical">
    <location>
        <begin position="1"/>
        <end position="276"/>
    </location>
</feature>
<comment type="function">
    <text evidence="1">Hydrolyzes diadenosine 5',5'''-P1,P4-tetraphosphate to yield ADP.</text>
</comment>
<comment type="catalytic activity">
    <reaction evidence="1">
        <text>P(1),P(4)-bis(5'-adenosyl) tetraphosphate + H2O = 2 ADP + 2 H(+)</text>
        <dbReference type="Rhea" id="RHEA:24252"/>
        <dbReference type="ChEBI" id="CHEBI:15377"/>
        <dbReference type="ChEBI" id="CHEBI:15378"/>
        <dbReference type="ChEBI" id="CHEBI:58141"/>
        <dbReference type="ChEBI" id="CHEBI:456216"/>
        <dbReference type="EC" id="3.6.1.41"/>
    </reaction>
</comment>
<comment type="similarity">
    <text evidence="1">Belongs to the Ap4A hydrolase family.</text>
</comment>